<reference key="1">
    <citation type="journal article" date="2009" name="Appl. Environ. Microbiol.">
        <title>Complete genome sequence of the chemolithoautotrophic marine magnetotactic coccus strain MC-1.</title>
        <authorList>
            <person name="Schubbe S."/>
            <person name="Williams T.J."/>
            <person name="Xie G."/>
            <person name="Kiss H.E."/>
            <person name="Brettin T.S."/>
            <person name="Martinez D."/>
            <person name="Ross C.A."/>
            <person name="Schuler D."/>
            <person name="Cox B.L."/>
            <person name="Nealson K.H."/>
            <person name="Bazylinski D.A."/>
        </authorList>
    </citation>
    <scope>NUCLEOTIDE SEQUENCE [LARGE SCALE GENOMIC DNA]</scope>
    <source>
        <strain>ATCC BAA-1437 / JCM 17883 / MC-1</strain>
    </source>
</reference>
<keyword id="KW-0067">ATP-binding</keyword>
<keyword id="KW-0143">Chaperone</keyword>
<keyword id="KW-0547">Nucleotide-binding</keyword>
<keyword id="KW-0597">Phosphoprotein</keyword>
<keyword id="KW-1185">Reference proteome</keyword>
<keyword id="KW-0346">Stress response</keyword>
<accession>A0L4Z2</accession>
<feature type="chain" id="PRO_1000059596" description="Chaperone protein DnaK">
    <location>
        <begin position="1"/>
        <end position="653"/>
    </location>
</feature>
<feature type="region of interest" description="Disordered" evidence="2">
    <location>
        <begin position="608"/>
        <end position="653"/>
    </location>
</feature>
<feature type="compositionally biased region" description="Low complexity" evidence="2">
    <location>
        <begin position="608"/>
        <end position="617"/>
    </location>
</feature>
<feature type="compositionally biased region" description="Gly residues" evidence="2">
    <location>
        <begin position="618"/>
        <end position="629"/>
    </location>
</feature>
<feature type="compositionally biased region" description="Acidic residues" evidence="2">
    <location>
        <begin position="639"/>
        <end position="653"/>
    </location>
</feature>
<feature type="modified residue" description="Phosphothreonine; by autocatalysis" evidence="1">
    <location>
        <position position="198"/>
    </location>
</feature>
<comment type="function">
    <text evidence="1">Acts as a chaperone.</text>
</comment>
<comment type="induction">
    <text evidence="1">By stress conditions e.g. heat shock.</text>
</comment>
<comment type="similarity">
    <text evidence="1">Belongs to the heat shock protein 70 family.</text>
</comment>
<name>DNAK_MAGMM</name>
<gene>
    <name evidence="1" type="primary">dnaK</name>
    <name type="ordered locus">Mmc1_0510</name>
</gene>
<evidence type="ECO:0000255" key="1">
    <source>
        <dbReference type="HAMAP-Rule" id="MF_00332"/>
    </source>
</evidence>
<evidence type="ECO:0000256" key="2">
    <source>
        <dbReference type="SAM" id="MobiDB-lite"/>
    </source>
</evidence>
<protein>
    <recommendedName>
        <fullName evidence="1">Chaperone protein DnaK</fullName>
    </recommendedName>
    <alternativeName>
        <fullName evidence="1">HSP70</fullName>
    </alternativeName>
    <alternativeName>
        <fullName evidence="1">Heat shock 70 kDa protein</fullName>
    </alternativeName>
    <alternativeName>
        <fullName evidence="1">Heat shock protein 70</fullName>
    </alternativeName>
</protein>
<sequence length="653" mass="69779">MGKVVGIDLGTTNSCVSIMEGGEPKVIENSEGVRTTPSMVAFTNQGERLVGQAAKRQAVTNPTNTLYAIKRLIGRRFSDPLTAKDQGLVPYKIVKADNGDAWVEADGKKMSPSECSAMILQKMKQTAEDYLGESVSEAVITVPAYFNDAQRQATKDAGRIAGLEVLRIINEPTAAALAYGLDKKDGQTIAVFDLGGGTFDISILEIGDGVFEVKSTNGDTFLGGEDFDMAIIDYLADQFKKENSIDLRKDSMALQRLKEAAEKAKIELSSSNQTDINLPFITADASGPKHLNLSLTRAKLESLVDELVQRTLAPCRTALKDAGMTAADIDEVILVGGMTRMPKVQAVVGQFFGKEPHKGVNPDEVVAIGAAIQGGVLKGEVQDVLLLDVTPLSLGIETLGGVFTKLIEKNTTVPTRKSQVFSTAADNQSAVTIRVAQGEREMFSDNKTLGQFDLVGIAPAPRGMPQIEVTFDIDANGMVHVSAKDKGTGKEQSIHIEASGGLTSEEIDRMVHEAESHAEEDAKKRALIEARNNADSLVYSSEKSLKEHSDKLDDALKNQITAAIEDLKAVMPKEDPEAISSKTQALMELSMKMGEQIYKENPEAAGMDPEAAAHAAGMHGGAATGGGDGANKHGKGAEDVVEAEFEEVNDDKK</sequence>
<organism>
    <name type="scientific">Magnetococcus marinus (strain ATCC BAA-1437 / JCM 17883 / MC-1)</name>
    <dbReference type="NCBI Taxonomy" id="156889"/>
    <lineage>
        <taxon>Bacteria</taxon>
        <taxon>Pseudomonadati</taxon>
        <taxon>Pseudomonadota</taxon>
        <taxon>Alphaproteobacteria</taxon>
        <taxon>Magnetococcales</taxon>
        <taxon>Magnetococcaceae</taxon>
        <taxon>Magnetococcus</taxon>
    </lineage>
</organism>
<proteinExistence type="inferred from homology"/>
<dbReference type="EMBL" id="CP000471">
    <property type="protein sequence ID" value="ABK43035.1"/>
    <property type="molecule type" value="Genomic_DNA"/>
</dbReference>
<dbReference type="RefSeq" id="WP_011712202.1">
    <property type="nucleotide sequence ID" value="NC_008576.1"/>
</dbReference>
<dbReference type="SMR" id="A0L4Z2"/>
<dbReference type="STRING" id="156889.Mmc1_0510"/>
<dbReference type="KEGG" id="mgm:Mmc1_0510"/>
<dbReference type="eggNOG" id="COG0443">
    <property type="taxonomic scope" value="Bacteria"/>
</dbReference>
<dbReference type="HOGENOM" id="CLU_005965_2_1_5"/>
<dbReference type="OrthoDB" id="9766019at2"/>
<dbReference type="Proteomes" id="UP000002586">
    <property type="component" value="Chromosome"/>
</dbReference>
<dbReference type="GO" id="GO:0005524">
    <property type="term" value="F:ATP binding"/>
    <property type="evidence" value="ECO:0007669"/>
    <property type="project" value="UniProtKB-UniRule"/>
</dbReference>
<dbReference type="GO" id="GO:0140662">
    <property type="term" value="F:ATP-dependent protein folding chaperone"/>
    <property type="evidence" value="ECO:0007669"/>
    <property type="project" value="InterPro"/>
</dbReference>
<dbReference type="GO" id="GO:0051082">
    <property type="term" value="F:unfolded protein binding"/>
    <property type="evidence" value="ECO:0007669"/>
    <property type="project" value="InterPro"/>
</dbReference>
<dbReference type="CDD" id="cd11733">
    <property type="entry name" value="ASKHA_NBD_HSP70_HSPA9"/>
    <property type="match status" value="1"/>
</dbReference>
<dbReference type="FunFam" id="2.60.34.10:FF:000014">
    <property type="entry name" value="Chaperone protein DnaK HSP70"/>
    <property type="match status" value="1"/>
</dbReference>
<dbReference type="FunFam" id="3.30.420.40:FF:000020">
    <property type="entry name" value="Chaperone protein HscA homolog"/>
    <property type="match status" value="1"/>
</dbReference>
<dbReference type="FunFam" id="1.20.1270.10:FF:000001">
    <property type="entry name" value="Molecular chaperone DnaK"/>
    <property type="match status" value="1"/>
</dbReference>
<dbReference type="FunFam" id="3.30.420.40:FF:000004">
    <property type="entry name" value="Molecular chaperone DnaK"/>
    <property type="match status" value="1"/>
</dbReference>
<dbReference type="FunFam" id="3.90.640.10:FF:000003">
    <property type="entry name" value="Molecular chaperone DnaK"/>
    <property type="match status" value="1"/>
</dbReference>
<dbReference type="Gene3D" id="1.20.1270.10">
    <property type="match status" value="1"/>
</dbReference>
<dbReference type="Gene3D" id="3.30.420.40">
    <property type="match status" value="2"/>
</dbReference>
<dbReference type="Gene3D" id="3.90.640.10">
    <property type="entry name" value="Actin, Chain A, domain 4"/>
    <property type="match status" value="1"/>
</dbReference>
<dbReference type="Gene3D" id="2.60.34.10">
    <property type="entry name" value="Substrate Binding Domain Of DNAk, Chain A, domain 1"/>
    <property type="match status" value="1"/>
</dbReference>
<dbReference type="HAMAP" id="MF_00332">
    <property type="entry name" value="DnaK"/>
    <property type="match status" value="1"/>
</dbReference>
<dbReference type="InterPro" id="IPR043129">
    <property type="entry name" value="ATPase_NBD"/>
</dbReference>
<dbReference type="InterPro" id="IPR012725">
    <property type="entry name" value="Chaperone_DnaK"/>
</dbReference>
<dbReference type="InterPro" id="IPR018181">
    <property type="entry name" value="Heat_shock_70_CS"/>
</dbReference>
<dbReference type="InterPro" id="IPR029048">
    <property type="entry name" value="HSP70_C_sf"/>
</dbReference>
<dbReference type="InterPro" id="IPR029047">
    <property type="entry name" value="HSP70_peptide-bd_sf"/>
</dbReference>
<dbReference type="InterPro" id="IPR013126">
    <property type="entry name" value="Hsp_70_fam"/>
</dbReference>
<dbReference type="NCBIfam" id="NF001413">
    <property type="entry name" value="PRK00290.1"/>
    <property type="match status" value="1"/>
</dbReference>
<dbReference type="NCBIfam" id="NF003520">
    <property type="entry name" value="PRK05183.1"/>
    <property type="match status" value="1"/>
</dbReference>
<dbReference type="NCBIfam" id="TIGR02350">
    <property type="entry name" value="prok_dnaK"/>
    <property type="match status" value="1"/>
</dbReference>
<dbReference type="PANTHER" id="PTHR19375">
    <property type="entry name" value="HEAT SHOCK PROTEIN 70KDA"/>
    <property type="match status" value="1"/>
</dbReference>
<dbReference type="Pfam" id="PF00012">
    <property type="entry name" value="HSP70"/>
    <property type="match status" value="1"/>
</dbReference>
<dbReference type="PRINTS" id="PR00301">
    <property type="entry name" value="HEATSHOCK70"/>
</dbReference>
<dbReference type="SUPFAM" id="SSF53067">
    <property type="entry name" value="Actin-like ATPase domain"/>
    <property type="match status" value="2"/>
</dbReference>
<dbReference type="SUPFAM" id="SSF100934">
    <property type="entry name" value="Heat shock protein 70kD (HSP70), C-terminal subdomain"/>
    <property type="match status" value="1"/>
</dbReference>
<dbReference type="SUPFAM" id="SSF100920">
    <property type="entry name" value="Heat shock protein 70kD (HSP70), peptide-binding domain"/>
    <property type="match status" value="1"/>
</dbReference>
<dbReference type="PROSITE" id="PS00297">
    <property type="entry name" value="HSP70_1"/>
    <property type="match status" value="1"/>
</dbReference>
<dbReference type="PROSITE" id="PS00329">
    <property type="entry name" value="HSP70_2"/>
    <property type="match status" value="1"/>
</dbReference>
<dbReference type="PROSITE" id="PS01036">
    <property type="entry name" value="HSP70_3"/>
    <property type="match status" value="1"/>
</dbReference>